<name>HIS3_RHILO</name>
<feature type="chain" id="PRO_0000136495" description="Phosphoribosyl-AMP cyclohydrolase">
    <location>
        <begin position="1"/>
        <end position="153"/>
    </location>
</feature>
<feature type="binding site" evidence="1">
    <location>
        <position position="93"/>
    </location>
    <ligand>
        <name>Mg(2+)</name>
        <dbReference type="ChEBI" id="CHEBI:18420"/>
    </ligand>
</feature>
<feature type="binding site" evidence="1">
    <location>
        <position position="94"/>
    </location>
    <ligand>
        <name>Zn(2+)</name>
        <dbReference type="ChEBI" id="CHEBI:29105"/>
        <note>ligand shared between dimeric partners</note>
    </ligand>
</feature>
<feature type="binding site" evidence="1">
    <location>
        <position position="95"/>
    </location>
    <ligand>
        <name>Mg(2+)</name>
        <dbReference type="ChEBI" id="CHEBI:18420"/>
    </ligand>
</feature>
<feature type="binding site" evidence="1">
    <location>
        <position position="97"/>
    </location>
    <ligand>
        <name>Mg(2+)</name>
        <dbReference type="ChEBI" id="CHEBI:18420"/>
    </ligand>
</feature>
<feature type="binding site" evidence="1">
    <location>
        <position position="112"/>
    </location>
    <ligand>
        <name>Zn(2+)</name>
        <dbReference type="ChEBI" id="CHEBI:29105"/>
        <note>ligand shared between dimeric partners</note>
    </ligand>
</feature>
<feature type="binding site" evidence="1">
    <location>
        <position position="119"/>
    </location>
    <ligand>
        <name>Zn(2+)</name>
        <dbReference type="ChEBI" id="CHEBI:29105"/>
        <note>ligand shared between dimeric partners</note>
    </ligand>
</feature>
<keyword id="KW-0028">Amino-acid biosynthesis</keyword>
<keyword id="KW-0963">Cytoplasm</keyword>
<keyword id="KW-0368">Histidine biosynthesis</keyword>
<keyword id="KW-0378">Hydrolase</keyword>
<keyword id="KW-0460">Magnesium</keyword>
<keyword id="KW-0479">Metal-binding</keyword>
<keyword id="KW-0862">Zinc</keyword>
<proteinExistence type="inferred from homology"/>
<protein>
    <recommendedName>
        <fullName evidence="1">Phosphoribosyl-AMP cyclohydrolase</fullName>
        <shortName evidence="1">PRA-CH</shortName>
        <ecNumber evidence="1">3.5.4.19</ecNumber>
    </recommendedName>
</protein>
<dbReference type="EC" id="3.5.4.19" evidence="1"/>
<dbReference type="EMBL" id="BA000012">
    <property type="protein sequence ID" value="BAB48408.1"/>
    <property type="molecule type" value="Genomic_DNA"/>
</dbReference>
<dbReference type="RefSeq" id="WP_010909762.1">
    <property type="nucleotide sequence ID" value="NC_002678.2"/>
</dbReference>
<dbReference type="SMR" id="Q98LQ5"/>
<dbReference type="GeneID" id="66683768"/>
<dbReference type="KEGG" id="mlo:mlr0923"/>
<dbReference type="eggNOG" id="COG0139">
    <property type="taxonomic scope" value="Bacteria"/>
</dbReference>
<dbReference type="HOGENOM" id="CLU_048577_5_0_5"/>
<dbReference type="UniPathway" id="UPA00031">
    <property type="reaction ID" value="UER00008"/>
</dbReference>
<dbReference type="Proteomes" id="UP000000552">
    <property type="component" value="Chromosome"/>
</dbReference>
<dbReference type="GO" id="GO:0005737">
    <property type="term" value="C:cytoplasm"/>
    <property type="evidence" value="ECO:0007669"/>
    <property type="project" value="UniProtKB-SubCell"/>
</dbReference>
<dbReference type="GO" id="GO:0000287">
    <property type="term" value="F:magnesium ion binding"/>
    <property type="evidence" value="ECO:0007669"/>
    <property type="project" value="UniProtKB-UniRule"/>
</dbReference>
<dbReference type="GO" id="GO:0004635">
    <property type="term" value="F:phosphoribosyl-AMP cyclohydrolase activity"/>
    <property type="evidence" value="ECO:0007669"/>
    <property type="project" value="UniProtKB-UniRule"/>
</dbReference>
<dbReference type="GO" id="GO:0008270">
    <property type="term" value="F:zinc ion binding"/>
    <property type="evidence" value="ECO:0007669"/>
    <property type="project" value="UniProtKB-UniRule"/>
</dbReference>
<dbReference type="GO" id="GO:0000105">
    <property type="term" value="P:L-histidine biosynthetic process"/>
    <property type="evidence" value="ECO:0007669"/>
    <property type="project" value="UniProtKB-UniRule"/>
</dbReference>
<dbReference type="FunFam" id="3.10.20.810:FF:000001">
    <property type="entry name" value="Histidine biosynthesis bifunctional protein HisIE"/>
    <property type="match status" value="1"/>
</dbReference>
<dbReference type="Gene3D" id="4.10.80.70">
    <property type="match status" value="1"/>
</dbReference>
<dbReference type="Gene3D" id="3.10.20.810">
    <property type="entry name" value="Phosphoribosyl-AMP cyclohydrolase"/>
    <property type="match status" value="1"/>
</dbReference>
<dbReference type="HAMAP" id="MF_01021">
    <property type="entry name" value="HisI"/>
    <property type="match status" value="1"/>
</dbReference>
<dbReference type="InterPro" id="IPR026660">
    <property type="entry name" value="PRA-CH"/>
</dbReference>
<dbReference type="InterPro" id="IPR002496">
    <property type="entry name" value="PRib_AMP_CycHydrolase_dom"/>
</dbReference>
<dbReference type="InterPro" id="IPR038019">
    <property type="entry name" value="PRib_AMP_CycHydrolase_sf"/>
</dbReference>
<dbReference type="NCBIfam" id="NF000768">
    <property type="entry name" value="PRK00051.1"/>
    <property type="match status" value="1"/>
</dbReference>
<dbReference type="PANTHER" id="PTHR42945">
    <property type="entry name" value="HISTIDINE BIOSYNTHESIS BIFUNCTIONAL PROTEIN"/>
    <property type="match status" value="1"/>
</dbReference>
<dbReference type="PANTHER" id="PTHR42945:SF1">
    <property type="entry name" value="HISTIDINE BIOSYNTHESIS BIFUNCTIONAL PROTEIN HIS7"/>
    <property type="match status" value="1"/>
</dbReference>
<dbReference type="Pfam" id="PF01502">
    <property type="entry name" value="PRA-CH"/>
    <property type="match status" value="1"/>
</dbReference>
<dbReference type="SUPFAM" id="SSF141734">
    <property type="entry name" value="HisI-like"/>
    <property type="match status" value="1"/>
</dbReference>
<sequence length="153" mass="16821">MSALGFPKTPSDKKALEEGAVFSPRFDPAGLVTVVVTDAEDGMLLMVAHMNAQALALTLETGIAHYWSRSRNALWKKGETSGNFQHVVEMRTDCDQDALWLRVKVLGHDATCHTGRRSCFYRTVGLVDGKGTLVDDGSKPLFDAEFTYRKPSS</sequence>
<reference key="1">
    <citation type="journal article" date="2000" name="DNA Res.">
        <title>Complete genome structure of the nitrogen-fixing symbiotic bacterium Mesorhizobium loti.</title>
        <authorList>
            <person name="Kaneko T."/>
            <person name="Nakamura Y."/>
            <person name="Sato S."/>
            <person name="Asamizu E."/>
            <person name="Kato T."/>
            <person name="Sasamoto S."/>
            <person name="Watanabe A."/>
            <person name="Idesawa K."/>
            <person name="Ishikawa A."/>
            <person name="Kawashima K."/>
            <person name="Kimura T."/>
            <person name="Kishida Y."/>
            <person name="Kiyokawa C."/>
            <person name="Kohara M."/>
            <person name="Matsumoto M."/>
            <person name="Matsuno A."/>
            <person name="Mochizuki Y."/>
            <person name="Nakayama S."/>
            <person name="Nakazaki N."/>
            <person name="Shimpo S."/>
            <person name="Sugimoto M."/>
            <person name="Takeuchi C."/>
            <person name="Yamada M."/>
            <person name="Tabata S."/>
        </authorList>
    </citation>
    <scope>NUCLEOTIDE SEQUENCE [LARGE SCALE GENOMIC DNA]</scope>
    <source>
        <strain>LMG 29417 / CECT 9101 / MAFF 303099</strain>
    </source>
</reference>
<gene>
    <name evidence="1" type="primary">hisI</name>
    <name type="ordered locus">mlr0923</name>
</gene>
<organism>
    <name type="scientific">Mesorhizobium japonicum (strain LMG 29417 / CECT 9101 / MAFF 303099)</name>
    <name type="common">Mesorhizobium loti (strain MAFF 303099)</name>
    <dbReference type="NCBI Taxonomy" id="266835"/>
    <lineage>
        <taxon>Bacteria</taxon>
        <taxon>Pseudomonadati</taxon>
        <taxon>Pseudomonadota</taxon>
        <taxon>Alphaproteobacteria</taxon>
        <taxon>Hyphomicrobiales</taxon>
        <taxon>Phyllobacteriaceae</taxon>
        <taxon>Mesorhizobium</taxon>
    </lineage>
</organism>
<evidence type="ECO:0000255" key="1">
    <source>
        <dbReference type="HAMAP-Rule" id="MF_01021"/>
    </source>
</evidence>
<accession>Q98LQ5</accession>
<comment type="function">
    <text evidence="1">Catalyzes the hydrolysis of the adenine ring of phosphoribosyl-AMP.</text>
</comment>
<comment type="catalytic activity">
    <reaction evidence="1">
        <text>1-(5-phospho-beta-D-ribosyl)-5'-AMP + H2O = 1-(5-phospho-beta-D-ribosyl)-5-[(5-phospho-beta-D-ribosylamino)methylideneamino]imidazole-4-carboxamide</text>
        <dbReference type="Rhea" id="RHEA:20049"/>
        <dbReference type="ChEBI" id="CHEBI:15377"/>
        <dbReference type="ChEBI" id="CHEBI:58435"/>
        <dbReference type="ChEBI" id="CHEBI:59457"/>
        <dbReference type="EC" id="3.5.4.19"/>
    </reaction>
</comment>
<comment type="cofactor">
    <cofactor evidence="1">
        <name>Mg(2+)</name>
        <dbReference type="ChEBI" id="CHEBI:18420"/>
    </cofactor>
    <text evidence="1">Binds 1 Mg(2+) ion per subunit.</text>
</comment>
<comment type="cofactor">
    <cofactor evidence="1">
        <name>Zn(2+)</name>
        <dbReference type="ChEBI" id="CHEBI:29105"/>
    </cofactor>
    <text evidence="1">Binds 1 zinc ion per subunit.</text>
</comment>
<comment type="pathway">
    <text evidence="1">Amino-acid biosynthesis; L-histidine biosynthesis; L-histidine from 5-phospho-alpha-D-ribose 1-diphosphate: step 3/9.</text>
</comment>
<comment type="subunit">
    <text evidence="1">Homodimer.</text>
</comment>
<comment type="subcellular location">
    <subcellularLocation>
        <location evidence="1">Cytoplasm</location>
    </subcellularLocation>
</comment>
<comment type="similarity">
    <text evidence="1">Belongs to the PRA-CH family.</text>
</comment>